<name>PO2F1_HUMAN</name>
<proteinExistence type="evidence at protein level"/>
<sequence>MNNPSETSKPSMESGDGNTGTQTNGLDFQKQPVPVGGAISTAQAQAFLGHLHQVQLAGTSLQAAAQSLNVQSKSNEESGDSQQPSQPSQQPSVQAAIPQTQLMLAGGQITGLTLTPAQQQLLLQQAQAQAQLLAAAVQQHSASQQHSAAGATISASAATPMTQIPLSQPIQIAQDLQQLQQLQQQNLNLQQFVLVHPTTNLQPAQFIISQTPQGQQGLLQAQNLLTQLPQQSQANLLQSQPSITLTSQPATPTRTIAATPIQTLPQSQSTPKRIDTPSLEEPSDLEELEQFAKTFKQRRIKLGFTQGDVGLAMGKLYGNDFSQTTISRFEALNLSFKNMCKLKPLLEKWLNDAENLSSDSSLSSPSALNSPGIEGLSRRRKKRTSIETNIRVALEKSFLENQKPTSEEITMIADQLNMEKEVIRVWFCNRRQKEKRINPPSSGGTSSSPIKAIFPSPTSLVATTPSLVTSSAATTLTVSPVLPLTSAAVTNLSVTGTSDTTSNNTATVISTAPPASSAVTSPSLSPSPSASASTSEASSASETSTTQTTSTPLSSPLGTSQVMVTASGLQTAAAAALQGAAQLPANASLAAMAAAAGLNPSLMAPSQFAAGGALLSLNPGTLSGALSPALMSNSTLATIQALASGGSLPITSLDATGNLVFANAGGAPNIVTAPLFLNPQNLSLLTSNPVSLVSAAAASAGNSAPVASLHATSTSAESIQNSLFTVASASGAASTTTTASKAQ</sequence>
<keyword id="KW-0002">3D-structure</keyword>
<keyword id="KW-0010">Activator</keyword>
<keyword id="KW-0025">Alternative splicing</keyword>
<keyword id="KW-0238">DNA-binding</keyword>
<keyword id="KW-0371">Homeobox</keyword>
<keyword id="KW-0539">Nucleus</keyword>
<keyword id="KW-0597">Phosphoprotein</keyword>
<keyword id="KW-1267">Proteomics identification</keyword>
<keyword id="KW-1185">Reference proteome</keyword>
<keyword id="KW-0804">Transcription</keyword>
<keyword id="KW-0805">Transcription regulation</keyword>
<evidence type="ECO:0000255" key="1">
    <source>
        <dbReference type="PROSITE-ProRule" id="PRU00108"/>
    </source>
</evidence>
<evidence type="ECO:0000255" key="2">
    <source>
        <dbReference type="PROSITE-ProRule" id="PRU00530"/>
    </source>
</evidence>
<evidence type="ECO:0000256" key="3">
    <source>
        <dbReference type="SAM" id="MobiDB-lite"/>
    </source>
</evidence>
<evidence type="ECO:0000269" key="4">
    <source>
    </source>
</evidence>
<evidence type="ECO:0000269" key="5">
    <source>
    </source>
</evidence>
<evidence type="ECO:0000269" key="6">
    <source>
    </source>
</evidence>
<evidence type="ECO:0000269" key="7">
    <source>
    </source>
</evidence>
<evidence type="ECO:0000269" key="8">
    <source>
    </source>
</evidence>
<evidence type="ECO:0000269" key="9">
    <source>
    </source>
</evidence>
<evidence type="ECO:0000269" key="10">
    <source>
    </source>
</evidence>
<evidence type="ECO:0000303" key="11">
    <source>
    </source>
</evidence>
<evidence type="ECO:0000303" key="12">
    <source>
    </source>
</evidence>
<evidence type="ECO:0000303" key="13">
    <source>
    </source>
</evidence>
<evidence type="ECO:0000305" key="14"/>
<evidence type="ECO:0000305" key="15">
    <source>
    </source>
</evidence>
<evidence type="ECO:0007744" key="16">
    <source>
    </source>
</evidence>
<evidence type="ECO:0007744" key="17">
    <source>
    </source>
</evidence>
<evidence type="ECO:0007829" key="18">
    <source>
        <dbReference type="PDB" id="1E3O"/>
    </source>
</evidence>
<organism>
    <name type="scientific">Homo sapiens</name>
    <name type="common">Human</name>
    <dbReference type="NCBI Taxonomy" id="9606"/>
    <lineage>
        <taxon>Eukaryota</taxon>
        <taxon>Metazoa</taxon>
        <taxon>Chordata</taxon>
        <taxon>Craniata</taxon>
        <taxon>Vertebrata</taxon>
        <taxon>Euteleostomi</taxon>
        <taxon>Mammalia</taxon>
        <taxon>Eutheria</taxon>
        <taxon>Euarchontoglires</taxon>
        <taxon>Primates</taxon>
        <taxon>Haplorrhini</taxon>
        <taxon>Catarrhini</taxon>
        <taxon>Hominidae</taxon>
        <taxon>Homo</taxon>
    </lineage>
</organism>
<accession>P14859</accession>
<accession>B1AL91</accession>
<accession>B1AL93</accession>
<accession>B4E029</accession>
<accession>J3KP77</accession>
<accession>Q5TBT7</accession>
<accession>Q6PK46</accession>
<accession>Q8NEU9</accession>
<accession>Q9BPV1</accession>
<comment type="function">
    <text evidence="4 7 10">Transcription factor that binds to the octamer motif (5'-ATTTGCAT-3') and activates the promoters of the genes for some small nuclear RNAs (snRNA) and of genes such as those for histone H2B and immunoglobulins. Modulates transcription transactivation by NR3C1, AR and PGR.</text>
</comment>
<comment type="function">
    <text evidence="15">(Microbial infection) In case of human herpes simplex virus (HSV) infection, POU2F1 forms a multiprotein-DNA complex with the viral transactivator protein VP16 and HCFC1 thereby enabling the transcription of the viral immediate early genes.</text>
</comment>
<comment type="subunit">
    <text evidence="4 5 10">Interacts with POU2AF1; the interaction increases POU2F1 transactivation activity (PubMed:7859290). Interacts with NR3C1, AR, PGR and HCFC1.</text>
</comment>
<comment type="subunit">
    <text evidence="5">(Microbial infection) Associates with the herpes simplex virus VP16-induced complex; binding to HCFC1 activates the viral transcriptional activator VP16 for association with POU2F1, to form a multiprotein-DNA complex responsible for activating transcription of the viral immediate early genes.</text>
</comment>
<comment type="subunit">
    <text evidence="9">(Microbial infection) Interacts with human herpesvirus 8 (KSHV) protein RTA/ORF50; this interaction enhances RTA/ORF50-mediated transactivation of several viral promoters including K-bZIP promoter.</text>
</comment>
<comment type="interaction">
    <interactant intactId="EBI-624770">
        <id>P14859</id>
    </interactant>
    <interactant intactId="EBI-751877">
        <id>Q9H4B4</id>
        <label>PLK3</label>
    </interactant>
    <organismsDiffer>false</organismsDiffer>
    <experiments>3</experiments>
</comment>
<comment type="interaction">
    <interactant intactId="EBI-624770">
        <id>P14859</id>
    </interactant>
    <interactant intactId="EBI-1389308">
        <id>Q7Z3K3</id>
        <label>POGZ</label>
    </interactant>
    <organismsDiffer>false</organismsDiffer>
    <experiments>3</experiments>
</comment>
<comment type="interaction">
    <interactant intactId="EBI-624770">
        <id>P14859</id>
    </interactant>
    <interactant intactId="EBI-298336">
        <id>P08047</id>
        <label>SP1</label>
    </interactant>
    <organismsDiffer>false</organismsDiffer>
    <experiments>7</experiments>
</comment>
<comment type="interaction">
    <interactant intactId="EBI-624770">
        <id>P14859</id>
    </interactant>
    <interactant intactId="EBI-10198587">
        <id>Q02446</id>
        <label>SP4</label>
    </interactant>
    <organismsDiffer>false</organismsDiffer>
    <experiments>5</experiments>
</comment>
<comment type="interaction">
    <interactant intactId="EBI-11526590">
        <id>P14859-6</id>
    </interactant>
    <interactant intactId="EBI-351829">
        <id>O15145</id>
        <label>ARPC3</label>
    </interactant>
    <organismsDiffer>false</organismsDiffer>
    <experiments>3</experiments>
</comment>
<comment type="interaction">
    <interactant intactId="EBI-11526590">
        <id>P14859-6</id>
    </interactant>
    <interactant intactId="EBI-743313">
        <id>P49407</id>
        <label>ARRB1</label>
    </interactant>
    <organismsDiffer>false</organismsDiffer>
    <experiments>3</experiments>
</comment>
<comment type="interaction">
    <interactant intactId="EBI-11526590">
        <id>P14859-6</id>
    </interactant>
    <interactant intactId="EBI-12884642">
        <id>Q03060-25</id>
        <label>CREM</label>
    </interactant>
    <organismsDiffer>false</organismsDiffer>
    <experiments>3</experiments>
</comment>
<comment type="interaction">
    <interactant intactId="EBI-11526590">
        <id>P14859-6</id>
    </interactant>
    <interactant intactId="EBI-12853322">
        <id>P55197-2</id>
        <label>MLLT10</label>
    </interactant>
    <organismsDiffer>false</organismsDiffer>
    <experiments>3</experiments>
</comment>
<comment type="interaction">
    <interactant intactId="EBI-11526590">
        <id>P14859-6</id>
    </interactant>
    <interactant intactId="EBI-11061759">
        <id>P23511-2</id>
        <label>NFYA</label>
    </interactant>
    <organismsDiffer>false</organismsDiffer>
    <experiments>5</experiments>
</comment>
<comment type="interaction">
    <interactant intactId="EBI-11526590">
        <id>P14859-6</id>
    </interactant>
    <interactant intactId="EBI-11526590">
        <id>P14859-6</id>
        <label>POU2F1</label>
    </interactant>
    <organismsDiffer>false</organismsDiffer>
    <experiments>3</experiments>
</comment>
<comment type="interaction">
    <interactant intactId="EBI-11526590">
        <id>P14859-6</id>
    </interactant>
    <interactant intactId="EBI-12029004">
        <id>P78424</id>
        <label>POU6F2</label>
    </interactant>
    <organismsDiffer>false</organismsDiffer>
    <experiments>3</experiments>
</comment>
<comment type="interaction">
    <interactant intactId="EBI-11526590">
        <id>P14859-6</id>
    </interactant>
    <interactant intactId="EBI-12906508">
        <id>O43314-2</id>
        <label>PPIP5K2</label>
    </interactant>
    <organismsDiffer>false</organismsDiffer>
    <experiments>3</experiments>
</comment>
<comment type="interaction">
    <interactant intactId="EBI-11526590">
        <id>P14859-6</id>
    </interactant>
    <interactant intactId="EBI-12754095">
        <id>P86480</id>
        <label>PRR20D</label>
    </interactant>
    <organismsDiffer>false</organismsDiffer>
    <experiments>3</experiments>
</comment>
<comment type="interaction">
    <interactant intactId="EBI-11526590">
        <id>P14859-6</id>
    </interactant>
    <interactant intactId="EBI-749336">
        <id>Q8TAD8</id>
        <label>SNIP1</label>
    </interactant>
    <organismsDiffer>false</organismsDiffer>
    <experiments>3</experiments>
</comment>
<comment type="interaction">
    <interactant intactId="EBI-11526590">
        <id>P14859-6</id>
    </interactant>
    <interactant intactId="EBI-727113">
        <id>Q9Y343</id>
        <label>SNX24</label>
    </interactant>
    <organismsDiffer>false</organismsDiffer>
    <experiments>3</experiments>
</comment>
<comment type="interaction">
    <interactant intactId="EBI-11526590">
        <id>P14859-6</id>
    </interactant>
    <interactant intactId="EBI-10198587">
        <id>Q02446</id>
        <label>SP4</label>
    </interactant>
    <organismsDiffer>false</organismsDiffer>
    <experiments>3</experiments>
</comment>
<comment type="interaction">
    <interactant intactId="EBI-11526590">
        <id>P14859-6</id>
    </interactant>
    <interactant intactId="EBI-3923644">
        <id>Q6ZVD7</id>
        <label>STOX1</label>
    </interactant>
    <organismsDiffer>false</organismsDiffer>
    <experiments>3</experiments>
</comment>
<comment type="interaction">
    <interactant intactId="EBI-11526590">
        <id>P14859-6</id>
    </interactant>
    <interactant intactId="EBI-10180829">
        <id>Q7KZS0</id>
        <label>UBE2I</label>
    </interactant>
    <organismsDiffer>false</organismsDiffer>
    <experiments>3</experiments>
</comment>
<comment type="interaction">
    <interactant intactId="EBI-11526590">
        <id>P14859-6</id>
    </interactant>
    <interactant intactId="EBI-742550">
        <id>Q96K80</id>
        <label>ZC3H10</label>
    </interactant>
    <organismsDiffer>false</organismsDiffer>
    <experiments>3</experiments>
</comment>
<comment type="interaction">
    <interactant intactId="EBI-11526590">
        <id>P14859-6</id>
    </interactant>
    <interactant intactId="EBI-10237226">
        <id>Q15911-2</id>
        <label>ZFHX3</label>
    </interactant>
    <organismsDiffer>false</organismsDiffer>
    <experiments>3</experiments>
</comment>
<comment type="interaction">
    <interactant intactId="EBI-11526590">
        <id>P14859-6</id>
    </interactant>
    <interactant intactId="EBI-12949277">
        <id>O95789-4</id>
        <label>ZMYM6</label>
    </interactant>
    <organismsDiffer>false</organismsDiffer>
    <experiments>3</experiments>
</comment>
<comment type="subcellular location">
    <subcellularLocation>
        <location>Nucleus</location>
    </subcellularLocation>
</comment>
<comment type="alternative products">
    <event type="alternative splicing"/>
    <isoform>
        <id>P14859-1</id>
        <name>1</name>
        <sequence type="displayed"/>
    </isoform>
    <isoform>
        <id>P14859-2</id>
        <name>2</name>
        <name>Oct-1L</name>
        <name>lymphocyte-specific</name>
        <sequence type="described" ref="VSP_002320"/>
    </isoform>
    <isoform>
        <id>P14859-3</id>
        <name>3</name>
        <sequence type="described" ref="VSP_013421"/>
    </isoform>
    <isoform>
        <id>P14859-6</id>
        <name>6</name>
        <sequence type="described" ref="VSP_043195"/>
    </isoform>
    <isoform>
        <id>P14859-4</id>
        <name>4</name>
        <sequence type="described" ref="VSP_013422 VSP_013423"/>
    </isoform>
    <isoform>
        <id>P14859-5</id>
        <name>5</name>
        <sequence type="described" ref="VSP_043195 VSP_043196"/>
    </isoform>
</comment>
<comment type="tissue specificity">
    <text>Ubiquitous. Isoform 2 is lymphocyte-specific.</text>
</comment>
<comment type="PTM">
    <text evidence="6 7">Phosphorylated by PRKDC.</text>
</comment>
<comment type="similarity">
    <text evidence="14">Belongs to the POU transcription factor family. Class-2 subfamily.</text>
</comment>
<reference key="1">
    <citation type="journal article" date="1988" name="Genes Dev.">
        <title>The ubiquitous octamer-binding protein Oct-1 contains a POU domain with a homeo box subdomain.</title>
        <authorList>
            <person name="Sturm R.A."/>
            <person name="Das G."/>
            <person name="Herr W."/>
        </authorList>
    </citation>
    <scope>PARTIAL NUCLEOTIDE SEQUENCE [MRNA] (ISOFORM 6)</scope>
    <source>
        <tissue>Teratocarcinoma</tissue>
    </source>
</reference>
<reference key="2">
    <citation type="journal article" date="2003" name="Immunol. Lett.">
        <title>Human Oct-1L isoform has tissue-specific expression pattern similar to Oct-2.</title>
        <authorList>
            <person name="Luchina N.N."/>
            <person name="Krivega I.V."/>
            <person name="Pankratova E.V."/>
        </authorList>
    </citation>
    <scope>NUCLEOTIDE SEQUENCE [MRNA] (ISOFORM 2)</scope>
    <source>
        <tissue>B-cell lymphoma</tissue>
    </source>
</reference>
<reference key="3">
    <citation type="journal article" date="2004" name="Nat. Genet.">
        <title>Complete sequencing and characterization of 21,243 full-length human cDNAs.</title>
        <authorList>
            <person name="Ota T."/>
            <person name="Suzuki Y."/>
            <person name="Nishikawa T."/>
            <person name="Otsuki T."/>
            <person name="Sugiyama T."/>
            <person name="Irie R."/>
            <person name="Wakamatsu A."/>
            <person name="Hayashi K."/>
            <person name="Sato H."/>
            <person name="Nagai K."/>
            <person name="Kimura K."/>
            <person name="Makita H."/>
            <person name="Sekine M."/>
            <person name="Obayashi M."/>
            <person name="Nishi T."/>
            <person name="Shibahara T."/>
            <person name="Tanaka T."/>
            <person name="Ishii S."/>
            <person name="Yamamoto J."/>
            <person name="Saito K."/>
            <person name="Kawai Y."/>
            <person name="Isono Y."/>
            <person name="Nakamura Y."/>
            <person name="Nagahari K."/>
            <person name="Murakami K."/>
            <person name="Yasuda T."/>
            <person name="Iwayanagi T."/>
            <person name="Wagatsuma M."/>
            <person name="Shiratori A."/>
            <person name="Sudo H."/>
            <person name="Hosoiri T."/>
            <person name="Kaku Y."/>
            <person name="Kodaira H."/>
            <person name="Kondo H."/>
            <person name="Sugawara M."/>
            <person name="Takahashi M."/>
            <person name="Kanda K."/>
            <person name="Yokoi T."/>
            <person name="Furuya T."/>
            <person name="Kikkawa E."/>
            <person name="Omura Y."/>
            <person name="Abe K."/>
            <person name="Kamihara K."/>
            <person name="Katsuta N."/>
            <person name="Sato K."/>
            <person name="Tanikawa M."/>
            <person name="Yamazaki M."/>
            <person name="Ninomiya K."/>
            <person name="Ishibashi T."/>
            <person name="Yamashita H."/>
            <person name="Murakawa K."/>
            <person name="Fujimori K."/>
            <person name="Tanai H."/>
            <person name="Kimata M."/>
            <person name="Watanabe M."/>
            <person name="Hiraoka S."/>
            <person name="Chiba Y."/>
            <person name="Ishida S."/>
            <person name="Ono Y."/>
            <person name="Takiguchi S."/>
            <person name="Watanabe S."/>
            <person name="Yosida M."/>
            <person name="Hotuta T."/>
            <person name="Kusano J."/>
            <person name="Kanehori K."/>
            <person name="Takahashi-Fujii A."/>
            <person name="Hara H."/>
            <person name="Tanase T.-O."/>
            <person name="Nomura Y."/>
            <person name="Togiya S."/>
            <person name="Komai F."/>
            <person name="Hara R."/>
            <person name="Takeuchi K."/>
            <person name="Arita M."/>
            <person name="Imose N."/>
            <person name="Musashino K."/>
            <person name="Yuuki H."/>
            <person name="Oshima A."/>
            <person name="Sasaki N."/>
            <person name="Aotsuka S."/>
            <person name="Yoshikawa Y."/>
            <person name="Matsunawa H."/>
            <person name="Ichihara T."/>
            <person name="Shiohata N."/>
            <person name="Sano S."/>
            <person name="Moriya S."/>
            <person name="Momiyama H."/>
            <person name="Satoh N."/>
            <person name="Takami S."/>
            <person name="Terashima Y."/>
            <person name="Suzuki O."/>
            <person name="Nakagawa S."/>
            <person name="Senoh A."/>
            <person name="Mizoguchi H."/>
            <person name="Goto Y."/>
            <person name="Shimizu F."/>
            <person name="Wakebe H."/>
            <person name="Hishigaki H."/>
            <person name="Watanabe T."/>
            <person name="Sugiyama A."/>
            <person name="Takemoto M."/>
            <person name="Kawakami B."/>
            <person name="Yamazaki M."/>
            <person name="Watanabe K."/>
            <person name="Kumagai A."/>
            <person name="Itakura S."/>
            <person name="Fukuzumi Y."/>
            <person name="Fujimori Y."/>
            <person name="Komiyama M."/>
            <person name="Tashiro H."/>
            <person name="Tanigami A."/>
            <person name="Fujiwara T."/>
            <person name="Ono T."/>
            <person name="Yamada K."/>
            <person name="Fujii Y."/>
            <person name="Ozaki K."/>
            <person name="Hirao M."/>
            <person name="Ohmori Y."/>
            <person name="Kawabata A."/>
            <person name="Hikiji T."/>
            <person name="Kobatake N."/>
            <person name="Inagaki H."/>
            <person name="Ikema Y."/>
            <person name="Okamoto S."/>
            <person name="Okitani R."/>
            <person name="Kawakami T."/>
            <person name="Noguchi S."/>
            <person name="Itoh T."/>
            <person name="Shigeta K."/>
            <person name="Senba T."/>
            <person name="Matsumura K."/>
            <person name="Nakajima Y."/>
            <person name="Mizuno T."/>
            <person name="Morinaga M."/>
            <person name="Sasaki M."/>
            <person name="Togashi T."/>
            <person name="Oyama M."/>
            <person name="Hata H."/>
            <person name="Watanabe M."/>
            <person name="Komatsu T."/>
            <person name="Mizushima-Sugano J."/>
            <person name="Satoh T."/>
            <person name="Shirai Y."/>
            <person name="Takahashi Y."/>
            <person name="Nakagawa K."/>
            <person name="Okumura K."/>
            <person name="Nagase T."/>
            <person name="Nomura N."/>
            <person name="Kikuchi H."/>
            <person name="Masuho Y."/>
            <person name="Yamashita R."/>
            <person name="Nakai K."/>
            <person name="Yada T."/>
            <person name="Nakamura Y."/>
            <person name="Ohara O."/>
            <person name="Isogai T."/>
            <person name="Sugano S."/>
        </authorList>
    </citation>
    <scope>NUCLEOTIDE SEQUENCE [LARGE SCALE MRNA] (ISOFORM 5)</scope>
    <source>
        <tissue>Thymus</tissue>
    </source>
</reference>
<reference key="4">
    <citation type="journal article" date="2006" name="Nature">
        <title>The DNA sequence and biological annotation of human chromosome 1.</title>
        <authorList>
            <person name="Gregory S.G."/>
            <person name="Barlow K.F."/>
            <person name="McLay K.E."/>
            <person name="Kaul R."/>
            <person name="Swarbreck D."/>
            <person name="Dunham A."/>
            <person name="Scott C.E."/>
            <person name="Howe K.L."/>
            <person name="Woodfine K."/>
            <person name="Spencer C.C.A."/>
            <person name="Jones M.C."/>
            <person name="Gillson C."/>
            <person name="Searle S."/>
            <person name="Zhou Y."/>
            <person name="Kokocinski F."/>
            <person name="McDonald L."/>
            <person name="Evans R."/>
            <person name="Phillips K."/>
            <person name="Atkinson A."/>
            <person name="Cooper R."/>
            <person name="Jones C."/>
            <person name="Hall R.E."/>
            <person name="Andrews T.D."/>
            <person name="Lloyd C."/>
            <person name="Ainscough R."/>
            <person name="Almeida J.P."/>
            <person name="Ambrose K.D."/>
            <person name="Anderson F."/>
            <person name="Andrew R.W."/>
            <person name="Ashwell R.I.S."/>
            <person name="Aubin K."/>
            <person name="Babbage A.K."/>
            <person name="Bagguley C.L."/>
            <person name="Bailey J."/>
            <person name="Beasley H."/>
            <person name="Bethel G."/>
            <person name="Bird C.P."/>
            <person name="Bray-Allen S."/>
            <person name="Brown J.Y."/>
            <person name="Brown A.J."/>
            <person name="Buckley D."/>
            <person name="Burton J."/>
            <person name="Bye J."/>
            <person name="Carder C."/>
            <person name="Chapman J.C."/>
            <person name="Clark S.Y."/>
            <person name="Clarke G."/>
            <person name="Clee C."/>
            <person name="Cobley V."/>
            <person name="Collier R.E."/>
            <person name="Corby N."/>
            <person name="Coville G.J."/>
            <person name="Davies J."/>
            <person name="Deadman R."/>
            <person name="Dunn M."/>
            <person name="Earthrowl M."/>
            <person name="Ellington A.G."/>
            <person name="Errington H."/>
            <person name="Frankish A."/>
            <person name="Frankland J."/>
            <person name="French L."/>
            <person name="Garner P."/>
            <person name="Garnett J."/>
            <person name="Gay L."/>
            <person name="Ghori M.R.J."/>
            <person name="Gibson R."/>
            <person name="Gilby L.M."/>
            <person name="Gillett W."/>
            <person name="Glithero R.J."/>
            <person name="Grafham D.V."/>
            <person name="Griffiths C."/>
            <person name="Griffiths-Jones S."/>
            <person name="Grocock R."/>
            <person name="Hammond S."/>
            <person name="Harrison E.S.I."/>
            <person name="Hart E."/>
            <person name="Haugen E."/>
            <person name="Heath P.D."/>
            <person name="Holmes S."/>
            <person name="Holt K."/>
            <person name="Howden P.J."/>
            <person name="Hunt A.R."/>
            <person name="Hunt S.E."/>
            <person name="Hunter G."/>
            <person name="Isherwood J."/>
            <person name="James R."/>
            <person name="Johnson C."/>
            <person name="Johnson D."/>
            <person name="Joy A."/>
            <person name="Kay M."/>
            <person name="Kershaw J.K."/>
            <person name="Kibukawa M."/>
            <person name="Kimberley A.M."/>
            <person name="King A."/>
            <person name="Knights A.J."/>
            <person name="Lad H."/>
            <person name="Laird G."/>
            <person name="Lawlor S."/>
            <person name="Leongamornlert D.A."/>
            <person name="Lloyd D.M."/>
            <person name="Loveland J."/>
            <person name="Lovell J."/>
            <person name="Lush M.J."/>
            <person name="Lyne R."/>
            <person name="Martin S."/>
            <person name="Mashreghi-Mohammadi M."/>
            <person name="Matthews L."/>
            <person name="Matthews N.S.W."/>
            <person name="McLaren S."/>
            <person name="Milne S."/>
            <person name="Mistry S."/>
            <person name="Moore M.J.F."/>
            <person name="Nickerson T."/>
            <person name="O'Dell C.N."/>
            <person name="Oliver K."/>
            <person name="Palmeiri A."/>
            <person name="Palmer S.A."/>
            <person name="Parker A."/>
            <person name="Patel D."/>
            <person name="Pearce A.V."/>
            <person name="Peck A.I."/>
            <person name="Pelan S."/>
            <person name="Phelps K."/>
            <person name="Phillimore B.J."/>
            <person name="Plumb R."/>
            <person name="Rajan J."/>
            <person name="Raymond C."/>
            <person name="Rouse G."/>
            <person name="Saenphimmachak C."/>
            <person name="Sehra H.K."/>
            <person name="Sheridan E."/>
            <person name="Shownkeen R."/>
            <person name="Sims S."/>
            <person name="Skuce C.D."/>
            <person name="Smith M."/>
            <person name="Steward C."/>
            <person name="Subramanian S."/>
            <person name="Sycamore N."/>
            <person name="Tracey A."/>
            <person name="Tromans A."/>
            <person name="Van Helmond Z."/>
            <person name="Wall M."/>
            <person name="Wallis J.M."/>
            <person name="White S."/>
            <person name="Whitehead S.L."/>
            <person name="Wilkinson J.E."/>
            <person name="Willey D.L."/>
            <person name="Williams H."/>
            <person name="Wilming L."/>
            <person name="Wray P.W."/>
            <person name="Wu Z."/>
            <person name="Coulson A."/>
            <person name="Vaudin M."/>
            <person name="Sulston J.E."/>
            <person name="Durbin R.M."/>
            <person name="Hubbard T."/>
            <person name="Wooster R."/>
            <person name="Dunham I."/>
            <person name="Carter N.P."/>
            <person name="McVean G."/>
            <person name="Ross M.T."/>
            <person name="Harrow J."/>
            <person name="Olson M.V."/>
            <person name="Beck S."/>
            <person name="Rogers J."/>
            <person name="Bentley D.R."/>
        </authorList>
    </citation>
    <scope>NUCLEOTIDE SEQUENCE [LARGE SCALE GENOMIC DNA]</scope>
</reference>
<reference key="5">
    <citation type="submission" date="2005-07" db="EMBL/GenBank/DDBJ databases">
        <authorList>
            <person name="Mural R.J."/>
            <person name="Istrail S."/>
            <person name="Sutton G.G."/>
            <person name="Florea L."/>
            <person name="Halpern A.L."/>
            <person name="Mobarry C.M."/>
            <person name="Lippert R."/>
            <person name="Walenz B."/>
            <person name="Shatkay H."/>
            <person name="Dew I."/>
            <person name="Miller J.R."/>
            <person name="Flanigan M.J."/>
            <person name="Edwards N.J."/>
            <person name="Bolanos R."/>
            <person name="Fasulo D."/>
            <person name="Halldorsson B.V."/>
            <person name="Hannenhalli S."/>
            <person name="Turner R."/>
            <person name="Yooseph S."/>
            <person name="Lu F."/>
            <person name="Nusskern D.R."/>
            <person name="Shue B.C."/>
            <person name="Zheng X.H."/>
            <person name="Zhong F."/>
            <person name="Delcher A.L."/>
            <person name="Huson D.H."/>
            <person name="Kravitz S.A."/>
            <person name="Mouchard L."/>
            <person name="Reinert K."/>
            <person name="Remington K.A."/>
            <person name="Clark A.G."/>
            <person name="Waterman M.S."/>
            <person name="Eichler E.E."/>
            <person name="Adams M.D."/>
            <person name="Hunkapiller M.W."/>
            <person name="Myers E.W."/>
            <person name="Venter J.C."/>
        </authorList>
    </citation>
    <scope>NUCLEOTIDE SEQUENCE [LARGE SCALE GENOMIC DNA]</scope>
</reference>
<reference key="6">
    <citation type="journal article" date="2004" name="Genome Res.">
        <title>The status, quality, and expansion of the NIH full-length cDNA project: the Mammalian Gene Collection (MGC).</title>
        <authorList>
            <consortium name="The MGC Project Team"/>
        </authorList>
    </citation>
    <scope>NUCLEOTIDE SEQUENCE [LARGE SCALE MRNA] (ISOFORM 1)</scope>
    <scope>NUCLEOTIDE SEQUENCE [LARGE SCALE MRNA] OF 93-653 (ISOFORM 4)</scope>
    <source>
        <tissue>Lung</tissue>
        <tissue>Lymph</tissue>
        <tissue>Skin</tissue>
    </source>
</reference>
<reference key="7">
    <citation type="journal article" date="1991" name="Science">
        <title>Mitotic phosphorylation of the Oct-1 homeodomain and regulation of Oct-1 DNA binding activity.</title>
        <authorList>
            <person name="Segil N."/>
            <person name="Roberts S.B."/>
            <person name="Heintz N."/>
        </authorList>
    </citation>
    <scope>PHOSPHORYLATION AT SER-385</scope>
    <scope>MUTAGENESIS OF SER-385</scope>
    <scope>FUNCTION IN DNA-BINDING ACTIVITY</scope>
</reference>
<reference key="8">
    <citation type="journal article" date="1995" name="Cell">
        <title>OBF-1, a novel B cell-specific coactivator that stimulates immunoglobulin promoter activity through association with octamer-binding proteins.</title>
        <authorList>
            <person name="Strubin M."/>
            <person name="Newell J.W."/>
            <person name="Matthias P."/>
        </authorList>
    </citation>
    <scope>FUNCTION</scope>
    <scope>INTERACTION WITH POU2AF1</scope>
    <scope>DNA-BINDING</scope>
    <source>
        <tissue>Spleen</tissue>
    </source>
</reference>
<reference key="9">
    <citation type="journal article" date="1999" name="J. Biol. Chem.">
        <title>Selective binding of steroid hormone receptors to octamer transcription factors determines transcriptional synergism at the mouse mammary tumor virus promoter.</title>
        <authorList>
            <person name="Prefontaine G.G."/>
            <person name="Walther R."/>
            <person name="Giffin W."/>
            <person name="Lemieux M.E."/>
            <person name="Pope L."/>
            <person name="Hache R.J.G."/>
        </authorList>
    </citation>
    <scope>INTERACTION WITH NR3C1; AR AND PGR</scope>
</reference>
<reference key="10">
    <citation type="journal article" date="2000" name="Mol. Cell. Biol.">
        <title>Mutations in host cell factor 1 separate its role in cell proliferation from recruitment of VP16 and LZIP.</title>
        <authorList>
            <person name="Mahajan S.S."/>
            <person name="Wilson A.C."/>
        </authorList>
    </citation>
    <scope>INTERACTION WITH HCFC1</scope>
</reference>
<reference key="11">
    <citation type="journal article" date="2003" name="Cancer Res.">
        <title>Down-regulation of histone H2B by DNA-dependent protein kinase in response to DNA damage through modulation of octamer transcription factor 1.</title>
        <authorList>
            <person name="Schild-Poulter C."/>
            <person name="Shih A."/>
            <person name="Yarymowich N.C."/>
            <person name="Hache R.J.G."/>
        </authorList>
    </citation>
    <scope>PHOSPHORYLATION</scope>
</reference>
<reference key="12">
    <citation type="journal article" date="2003" name="Trends Biochem. Sci.">
        <title>The herpes simplex virus VP16-induced complex: the makings of a regulatory switch.</title>
        <authorList>
            <person name="Wysocka J."/>
            <person name="Herr W."/>
        </authorList>
    </citation>
    <scope>REVIEW ON HERPES INFECTION</scope>
</reference>
<reference key="13">
    <citation type="journal article" date="2006" name="Nat. Biotechnol.">
        <title>A probability-based approach for high-throughput protein phosphorylation analysis and site localization.</title>
        <authorList>
            <person name="Beausoleil S.A."/>
            <person name="Villen J."/>
            <person name="Gerber S.A."/>
            <person name="Rush J."/>
            <person name="Gygi S.P."/>
        </authorList>
    </citation>
    <scope>IDENTIFICATION BY MASS SPECTROMETRY [LARGE SCALE ANALYSIS]</scope>
    <source>
        <tissue>Cervix carcinoma</tissue>
    </source>
</reference>
<reference key="14">
    <citation type="journal article" date="2007" name="J. Virol.">
        <title>Direct interactions of Kaposi's sarcoma-associated herpesvirus/human herpesvirus 8 ORF50/Rta protein with the cellular protein octamer-1 and DNA are critical for specifying transactivation of a delayed-early promoter and stimulating viral reactivation.</title>
        <authorList>
            <person name="Carroll K.D."/>
            <person name="Khadim F."/>
            <person name="Spadavecchia S."/>
            <person name="Palmeri D."/>
            <person name="Lukac D.M."/>
        </authorList>
    </citation>
    <scope>INTERACTION WITH HUMAN HERPESVIRUS 8 PROTEIN RTA/ORF50 (MICROBIAL INFECTION)</scope>
</reference>
<reference key="15">
    <citation type="journal article" date="2008" name="Proc. Natl. Acad. Sci. U.S.A.">
        <title>A quantitative atlas of mitotic phosphorylation.</title>
        <authorList>
            <person name="Dephoure N."/>
            <person name="Zhou C."/>
            <person name="Villen J."/>
            <person name="Beausoleil S.A."/>
            <person name="Bakalarski C.E."/>
            <person name="Elledge S.J."/>
            <person name="Gygi S.P."/>
        </authorList>
    </citation>
    <scope>PHOSPHORYLATION [LARGE SCALE ANALYSIS] AT THR-270; SER-283 AND SER-448</scope>
    <scope>IDENTIFICATION BY MASS SPECTROMETRY [LARGE SCALE ANALYSIS]</scope>
    <source>
        <tissue>Cervix carcinoma</tissue>
    </source>
</reference>
<reference key="16">
    <citation type="journal article" date="2009" name="Anal. Chem.">
        <title>Lys-N and trypsin cover complementary parts of the phosphoproteome in a refined SCX-based approach.</title>
        <authorList>
            <person name="Gauci S."/>
            <person name="Helbig A.O."/>
            <person name="Slijper M."/>
            <person name="Krijgsveld J."/>
            <person name="Heck A.J."/>
            <person name="Mohammed S."/>
        </authorList>
    </citation>
    <scope>IDENTIFICATION BY MASS SPECTROMETRY [LARGE SCALE ANALYSIS]</scope>
</reference>
<reference key="17">
    <citation type="journal article" date="2010" name="Sci. Signal.">
        <title>Quantitative phosphoproteomics reveals widespread full phosphorylation site occupancy during mitosis.</title>
        <authorList>
            <person name="Olsen J.V."/>
            <person name="Vermeulen M."/>
            <person name="Santamaria A."/>
            <person name="Kumar C."/>
            <person name="Miller M.L."/>
            <person name="Jensen L.J."/>
            <person name="Gnad F."/>
            <person name="Cox J."/>
            <person name="Jensen T.S."/>
            <person name="Nigg E.A."/>
            <person name="Brunak S."/>
            <person name="Mann M."/>
        </authorList>
    </citation>
    <scope>IDENTIFICATION BY MASS SPECTROMETRY [LARGE SCALE ANALYSIS]</scope>
    <source>
        <tissue>Cervix carcinoma</tissue>
    </source>
</reference>
<reference key="18">
    <citation type="journal article" date="2011" name="BMC Syst. Biol.">
        <title>Initial characterization of the human central proteome.</title>
        <authorList>
            <person name="Burkard T.R."/>
            <person name="Planyavsky M."/>
            <person name="Kaupe I."/>
            <person name="Breitwieser F.P."/>
            <person name="Buerckstuemmer T."/>
            <person name="Bennett K.L."/>
            <person name="Superti-Furga G."/>
            <person name="Colinge J."/>
        </authorList>
    </citation>
    <scope>IDENTIFICATION BY MASS SPECTROMETRY [LARGE SCALE ANALYSIS]</scope>
</reference>
<reference key="19">
    <citation type="journal article" date="2011" name="Sci. Signal.">
        <title>System-wide temporal characterization of the proteome and phosphoproteome of human embryonic stem cell differentiation.</title>
        <authorList>
            <person name="Rigbolt K.T."/>
            <person name="Prokhorova T.A."/>
            <person name="Akimov V."/>
            <person name="Henningsen J."/>
            <person name="Johansen P.T."/>
            <person name="Kratchmarova I."/>
            <person name="Kassem M."/>
            <person name="Mann M."/>
            <person name="Olsen J.V."/>
            <person name="Blagoev B."/>
        </authorList>
    </citation>
    <scope>IDENTIFICATION BY MASS SPECTROMETRY [LARGE SCALE ANALYSIS]</scope>
</reference>
<reference key="20">
    <citation type="journal article" date="2013" name="J. Proteome Res.">
        <title>Toward a comprehensive characterization of a human cancer cell phosphoproteome.</title>
        <authorList>
            <person name="Zhou H."/>
            <person name="Di Palma S."/>
            <person name="Preisinger C."/>
            <person name="Peng M."/>
            <person name="Polat A.N."/>
            <person name="Heck A.J."/>
            <person name="Mohammed S."/>
        </authorList>
    </citation>
    <scope>PHOSPHORYLATION [LARGE SCALE ANALYSIS] AT THR-276 AND SER-448</scope>
    <scope>IDENTIFICATION BY MASS SPECTROMETRY [LARGE SCALE ANALYSIS]</scope>
    <source>
        <tissue>Cervix carcinoma</tissue>
        <tissue>Erythroleukemia</tissue>
    </source>
</reference>
<reference key="21">
    <citation type="journal article" date="2014" name="J. Proteomics">
        <title>An enzyme assisted RP-RPLC approach for in-depth analysis of human liver phosphoproteome.</title>
        <authorList>
            <person name="Bian Y."/>
            <person name="Song C."/>
            <person name="Cheng K."/>
            <person name="Dong M."/>
            <person name="Wang F."/>
            <person name="Huang J."/>
            <person name="Sun D."/>
            <person name="Wang L."/>
            <person name="Ye M."/>
            <person name="Zou H."/>
        </authorList>
    </citation>
    <scope>IDENTIFICATION BY MASS SPECTROMETRY [LARGE SCALE ANALYSIS]</scope>
    <source>
        <tissue>Liver</tissue>
    </source>
</reference>
<reference key="22">
    <citation type="journal article" date="1993" name="Nature">
        <title>Solution structure of the POU-specific DNA-binding domain of Oct-1.</title>
        <authorList>
            <person name="Dekker N."/>
            <person name="Cox M."/>
            <person name="Boelens R."/>
            <person name="Verrijzer C.P."/>
            <person name="van der Vliet P.C."/>
            <person name="Kaptein R."/>
        </authorList>
    </citation>
    <scope>STRUCTURE BY NMR OF 284-359</scope>
</reference>
<reference key="23">
    <citation type="journal article" date="1993" name="Cell">
        <title>The solution structure of the Oct-1 POU-specific domain reveals a striking similarity to the bacteriophage lambda repressor DNA-binding domain.</title>
        <authorList>
            <person name="Assa-Munt N."/>
            <person name="Mortishire-Smith R.J."/>
            <person name="Aurora R."/>
            <person name="Herr W."/>
            <person name="Wright P.E."/>
        </authorList>
    </citation>
    <scope>STRUCTURE BY NMR OF 284-354</scope>
</reference>
<reference key="24">
    <citation type="journal article" date="1995" name="J. Biomol. NMR">
        <title>Solution structure of the Oct-1 POU homeodomain determined by NMR and restrained molecular dynamics.</title>
        <authorList>
            <person name="Cox M."/>
            <person name="van Tilborg P.J.A."/>
            <person name="de Laat W."/>
            <person name="Boelens R."/>
            <person name="van Leeuwen H.C."/>
            <person name="van der Vliet P.C."/>
            <person name="Kaptein R."/>
        </authorList>
    </citation>
    <scope>STRUCTURE BY NMR OF 378-437</scope>
</reference>
<reference key="25">
    <citation type="journal article" date="1994" name="Cell">
        <title>Crystal structure of the Oct-1 POU domain bound to an octamer site: DNA recognition with tethered DNA-binding modules.</title>
        <authorList>
            <person name="Klemm J.D."/>
            <person name="Rould M.A."/>
            <person name="Aurora R."/>
            <person name="Herr W."/>
            <person name="Pabo C.O."/>
        </authorList>
    </citation>
    <scope>X-RAY CRYSTALLOGRAPHY (3.0 ANGSTROMS) OF 284-439</scope>
</reference>
<reference key="26">
    <citation type="journal article" date="2006" name="Science">
        <title>The consensus coding sequences of human breast and colorectal cancers.</title>
        <authorList>
            <person name="Sjoeblom T."/>
            <person name="Jones S."/>
            <person name="Wood L.D."/>
            <person name="Parsons D.W."/>
            <person name="Lin J."/>
            <person name="Barber T.D."/>
            <person name="Mandelker D."/>
            <person name="Leary R.J."/>
            <person name="Ptak J."/>
            <person name="Silliman N."/>
            <person name="Szabo S."/>
            <person name="Buckhaults P."/>
            <person name="Farrell C."/>
            <person name="Meeh P."/>
            <person name="Markowitz S.D."/>
            <person name="Willis J."/>
            <person name="Dawson D."/>
            <person name="Willson J.K.V."/>
            <person name="Gazdar A.F."/>
            <person name="Hartigan J."/>
            <person name="Wu L."/>
            <person name="Liu C."/>
            <person name="Parmigiani G."/>
            <person name="Park B.H."/>
            <person name="Bachman K.E."/>
            <person name="Papadopoulos N."/>
            <person name="Vogelstein B."/>
            <person name="Kinzler K.W."/>
            <person name="Velculescu V.E."/>
        </authorList>
    </citation>
    <scope>VARIANT [LARGE SCALE ANALYSIS] PHE-88</scope>
</reference>
<protein>
    <recommendedName>
        <fullName>POU domain, class 2, transcription factor 1</fullName>
    </recommendedName>
    <alternativeName>
        <fullName>NF-A1</fullName>
    </alternativeName>
    <alternativeName>
        <fullName>Octamer-binding protein 1</fullName>
        <shortName>Oct-1</shortName>
    </alternativeName>
    <alternativeName>
        <fullName>Octamer-binding transcription factor 1</fullName>
        <shortName>OTF-1</shortName>
    </alternativeName>
</protein>
<gene>
    <name type="primary">POU2F1</name>
    <name type="synonym">OCT1</name>
    <name type="synonym">OTF1</name>
</gene>
<dbReference type="EMBL" id="X13403">
    <property type="protein sequence ID" value="CAA31767.1"/>
    <property type="molecule type" value="mRNA"/>
</dbReference>
<dbReference type="EMBL" id="AY113189">
    <property type="protein sequence ID" value="AAM77920.1"/>
    <property type="molecule type" value="mRNA"/>
</dbReference>
<dbReference type="EMBL" id="AK303201">
    <property type="protein sequence ID" value="BAG64291.1"/>
    <property type="molecule type" value="mRNA"/>
</dbReference>
<dbReference type="EMBL" id="AL136984">
    <property type="status" value="NOT_ANNOTATED_CDS"/>
    <property type="molecule type" value="Genomic_DNA"/>
</dbReference>
<dbReference type="EMBL" id="AL359962">
    <property type="status" value="NOT_ANNOTATED_CDS"/>
    <property type="molecule type" value="Genomic_DNA"/>
</dbReference>
<dbReference type="EMBL" id="AL451050">
    <property type="status" value="NOT_ANNOTATED_CDS"/>
    <property type="molecule type" value="Genomic_DNA"/>
</dbReference>
<dbReference type="EMBL" id="CH471067">
    <property type="protein sequence ID" value="EAW90786.1"/>
    <property type="molecule type" value="Genomic_DNA"/>
</dbReference>
<dbReference type="EMBL" id="CH471067">
    <property type="protein sequence ID" value="EAW90788.1"/>
    <property type="molecule type" value="Genomic_DNA"/>
</dbReference>
<dbReference type="EMBL" id="BC001664">
    <property type="protein sequence ID" value="AAH01664.1"/>
    <property type="molecule type" value="mRNA"/>
</dbReference>
<dbReference type="EMBL" id="BC003571">
    <property type="protein sequence ID" value="AAH03571.1"/>
    <property type="molecule type" value="mRNA"/>
</dbReference>
<dbReference type="EMBL" id="BC007388">
    <property type="protein sequence ID" value="AAH07388.1"/>
    <property type="molecule type" value="mRNA"/>
</dbReference>
<dbReference type="EMBL" id="BC052274">
    <property type="protein sequence ID" value="AAH52274.1"/>
    <property type="molecule type" value="mRNA"/>
</dbReference>
<dbReference type="CCDS" id="CCDS1259.2">
    <molecule id="P14859-6"/>
</dbReference>
<dbReference type="CCDS" id="CCDS55655.1">
    <molecule id="P14859-5"/>
</dbReference>
<dbReference type="CCDS" id="CCDS55656.1">
    <molecule id="P14859-2"/>
</dbReference>
<dbReference type="PIR" id="A47001">
    <property type="entry name" value="A47001"/>
</dbReference>
<dbReference type="RefSeq" id="NP_001185712.1">
    <molecule id="P14859-2"/>
    <property type="nucleotide sequence ID" value="NM_001198783.2"/>
</dbReference>
<dbReference type="RefSeq" id="NP_001185715.1">
    <molecule id="P14859-5"/>
    <property type="nucleotide sequence ID" value="NM_001198786.2"/>
</dbReference>
<dbReference type="RefSeq" id="NP_001352777.1">
    <molecule id="P14859-3"/>
    <property type="nucleotide sequence ID" value="NM_001365848.1"/>
</dbReference>
<dbReference type="RefSeq" id="NP_001352778.1">
    <molecule id="P14859-3"/>
    <property type="nucleotide sequence ID" value="NM_001365849.1"/>
</dbReference>
<dbReference type="RefSeq" id="NP_002688.3">
    <molecule id="P14859-6"/>
    <property type="nucleotide sequence ID" value="NM_002697.3"/>
</dbReference>
<dbReference type="RefSeq" id="XP_011507956.1">
    <molecule id="P14859-1"/>
    <property type="nucleotide sequence ID" value="XM_011509654.4"/>
</dbReference>
<dbReference type="RefSeq" id="XP_047278825.1">
    <molecule id="P14859-1"/>
    <property type="nucleotide sequence ID" value="XM_047422869.1"/>
</dbReference>
<dbReference type="RefSeq" id="XP_047278831.1">
    <molecule id="P14859-1"/>
    <property type="nucleotide sequence ID" value="XM_047422875.1"/>
</dbReference>
<dbReference type="RefSeq" id="XP_054193107.1">
    <molecule id="P14859-1"/>
    <property type="nucleotide sequence ID" value="XM_054337132.1"/>
</dbReference>
<dbReference type="RefSeq" id="XP_054193108.1">
    <molecule id="P14859-1"/>
    <property type="nucleotide sequence ID" value="XM_054337133.1"/>
</dbReference>
<dbReference type="RefSeq" id="XP_054193109.1">
    <molecule id="P14859-1"/>
    <property type="nucleotide sequence ID" value="XM_054337134.1"/>
</dbReference>
<dbReference type="PDB" id="1CQT">
    <property type="method" value="X-ray"/>
    <property type="resolution" value="3.20 A"/>
    <property type="chains" value="A/B=278-439"/>
</dbReference>
<dbReference type="PDB" id="1E3O">
    <property type="method" value="X-ray"/>
    <property type="resolution" value="1.90 A"/>
    <property type="chains" value="C=280-438"/>
</dbReference>
<dbReference type="PDB" id="1GT0">
    <property type="method" value="X-ray"/>
    <property type="resolution" value="2.60 A"/>
    <property type="chains" value="C=280-438"/>
</dbReference>
<dbReference type="PDB" id="1HF0">
    <property type="method" value="X-ray"/>
    <property type="resolution" value="2.70 A"/>
    <property type="chains" value="A/B=280-438"/>
</dbReference>
<dbReference type="PDB" id="1O4X">
    <property type="method" value="NMR"/>
    <property type="chains" value="A=280-442"/>
</dbReference>
<dbReference type="PDB" id="1OCT">
    <property type="method" value="X-ray"/>
    <property type="resolution" value="3.00 A"/>
    <property type="chains" value="C=284-439"/>
</dbReference>
<dbReference type="PDB" id="1POG">
    <property type="method" value="NMR"/>
    <property type="chains" value="A=378-437"/>
</dbReference>
<dbReference type="PDB" id="1POU">
    <property type="method" value="NMR"/>
    <property type="chains" value="A=284-354"/>
</dbReference>
<dbReference type="PDBsum" id="1CQT"/>
<dbReference type="PDBsum" id="1E3O"/>
<dbReference type="PDBsum" id="1GT0"/>
<dbReference type="PDBsum" id="1HF0"/>
<dbReference type="PDBsum" id="1O4X"/>
<dbReference type="PDBsum" id="1OCT"/>
<dbReference type="PDBsum" id="1POG"/>
<dbReference type="PDBsum" id="1POU"/>
<dbReference type="SMR" id="P14859"/>
<dbReference type="BioGRID" id="111447">
    <property type="interactions" value="178"/>
</dbReference>
<dbReference type="CORUM" id="P14859"/>
<dbReference type="DIP" id="DIP-226N"/>
<dbReference type="FunCoup" id="P14859">
    <property type="interactions" value="3123"/>
</dbReference>
<dbReference type="IntAct" id="P14859">
    <property type="interactions" value="68"/>
</dbReference>
<dbReference type="MINT" id="P14859"/>
<dbReference type="STRING" id="9606.ENSP00000356840"/>
<dbReference type="BindingDB" id="P14859"/>
<dbReference type="ChEMBL" id="CHEMBL3509601"/>
<dbReference type="DrugBank" id="DB01203">
    <property type="generic name" value="Nadolol"/>
</dbReference>
<dbReference type="MoonProt" id="P14859"/>
<dbReference type="GlyCosmos" id="P14859">
    <property type="glycosylation" value="15 sites, 2 glycans"/>
</dbReference>
<dbReference type="GlyGen" id="P14859">
    <property type="glycosylation" value="20 sites, 2 O-linked glycans (19 sites)"/>
</dbReference>
<dbReference type="iPTMnet" id="P14859"/>
<dbReference type="PhosphoSitePlus" id="P14859"/>
<dbReference type="BioMuta" id="POU2F1"/>
<dbReference type="DMDM" id="28202257"/>
<dbReference type="jPOST" id="P14859"/>
<dbReference type="MassIVE" id="P14859"/>
<dbReference type="PaxDb" id="9606-ENSP00000356840"/>
<dbReference type="PeptideAtlas" id="P14859"/>
<dbReference type="ProteomicsDB" id="53085">
    <molecule id="P14859-1"/>
</dbReference>
<dbReference type="ProteomicsDB" id="53086">
    <molecule id="P14859-2"/>
</dbReference>
<dbReference type="ProteomicsDB" id="53087">
    <molecule id="P14859-3"/>
</dbReference>
<dbReference type="ProteomicsDB" id="53088">
    <molecule id="P14859-4"/>
</dbReference>
<dbReference type="ProteomicsDB" id="53089">
    <molecule id="P14859-5"/>
</dbReference>
<dbReference type="Pumba" id="P14859"/>
<dbReference type="Antibodypedia" id="3616">
    <property type="antibodies" value="649 antibodies from 45 providers"/>
</dbReference>
<dbReference type="DNASU" id="5451"/>
<dbReference type="Ensembl" id="ENST00000367862.9">
    <molecule id="P14859-2"/>
    <property type="protein sequence ID" value="ENSP00000356836.5"/>
    <property type="gene ID" value="ENSG00000143190.23"/>
</dbReference>
<dbReference type="Ensembl" id="ENST00000367866.7">
    <molecule id="P14859-6"/>
    <property type="protein sequence ID" value="ENSP00000356840.2"/>
    <property type="gene ID" value="ENSG00000143190.23"/>
</dbReference>
<dbReference type="Ensembl" id="ENST00000429375.6">
    <molecule id="P14859-5"/>
    <property type="protein sequence ID" value="ENSP00000401217.2"/>
    <property type="gene ID" value="ENSG00000143190.23"/>
</dbReference>
<dbReference type="Ensembl" id="ENST00000541643.7">
    <molecule id="P14859-1"/>
    <property type="protein sequence ID" value="ENSP00000441285.2"/>
    <property type="gene ID" value="ENSG00000143190.23"/>
</dbReference>
<dbReference type="GeneID" id="5451"/>
<dbReference type="KEGG" id="hsa:5451"/>
<dbReference type="MANE-Select" id="ENST00000367866.7">
    <molecule id="P14859-6"/>
    <property type="protein sequence ID" value="ENSP00000356840.2"/>
    <property type="RefSeq nucleotide sequence ID" value="NM_002697.4"/>
    <property type="RefSeq protein sequence ID" value="NP_002688.3"/>
</dbReference>
<dbReference type="UCSC" id="uc001gec.4">
    <molecule id="P14859-1"/>
    <property type="organism name" value="human"/>
</dbReference>
<dbReference type="AGR" id="HGNC:9212"/>
<dbReference type="CTD" id="5451"/>
<dbReference type="DisGeNET" id="5451"/>
<dbReference type="GeneCards" id="POU2F1"/>
<dbReference type="HGNC" id="HGNC:9212">
    <property type="gene designation" value="POU2F1"/>
</dbReference>
<dbReference type="HPA" id="ENSG00000143190">
    <property type="expression patterns" value="Low tissue specificity"/>
</dbReference>
<dbReference type="MIM" id="164175">
    <property type="type" value="gene"/>
</dbReference>
<dbReference type="neXtProt" id="NX_P14859"/>
<dbReference type="OpenTargets" id="ENSG00000143190"/>
<dbReference type="PharmGKB" id="PA33536"/>
<dbReference type="VEuPathDB" id="HostDB:ENSG00000143190"/>
<dbReference type="eggNOG" id="KOG3802">
    <property type="taxonomic scope" value="Eukaryota"/>
</dbReference>
<dbReference type="GeneTree" id="ENSGT00940000157831"/>
<dbReference type="HOGENOM" id="CLU_013065_4_0_1"/>
<dbReference type="InParanoid" id="P14859"/>
<dbReference type="OMA" id="TPKRMDT"/>
<dbReference type="OrthoDB" id="6358449at2759"/>
<dbReference type="PAN-GO" id="P14859">
    <property type="GO annotations" value="3 GO annotations based on evolutionary models"/>
</dbReference>
<dbReference type="PhylomeDB" id="P14859"/>
<dbReference type="TreeFam" id="TF316413"/>
<dbReference type="PathwayCommons" id="P14859"/>
<dbReference type="Reactome" id="R-HSA-6785807">
    <property type="pathway name" value="Interleukin-4 and Interleukin-13 signaling"/>
</dbReference>
<dbReference type="Reactome" id="R-HSA-6807505">
    <property type="pathway name" value="RNA polymerase II transcribes snRNA genes"/>
</dbReference>
<dbReference type="Reactome" id="R-HSA-749476">
    <property type="pathway name" value="RNA Polymerase III Abortive And Retractive Initiation"/>
</dbReference>
<dbReference type="Reactome" id="R-HSA-76071">
    <property type="pathway name" value="RNA Polymerase III Transcription Initiation From Type 3 Promoter"/>
</dbReference>
<dbReference type="Reactome" id="R-HSA-9018519">
    <property type="pathway name" value="Estrogen-dependent gene expression"/>
</dbReference>
<dbReference type="SignaLink" id="P14859"/>
<dbReference type="SIGNOR" id="P14859"/>
<dbReference type="BioGRID-ORCS" id="5451">
    <property type="hits" value="69 hits in 1184 CRISPR screens"/>
</dbReference>
<dbReference type="CD-CODE" id="A0DCDA94">
    <property type="entry name" value="DNA damage foci"/>
</dbReference>
<dbReference type="ChiTaRS" id="POU2F1">
    <property type="organism name" value="human"/>
</dbReference>
<dbReference type="EvolutionaryTrace" id="P14859"/>
<dbReference type="GeneWiki" id="POU2F1"/>
<dbReference type="GenomeRNAi" id="5451"/>
<dbReference type="Pharos" id="P14859">
    <property type="development level" value="Tbio"/>
</dbReference>
<dbReference type="PRO" id="PR:P14859"/>
<dbReference type="Proteomes" id="UP000005640">
    <property type="component" value="Chromosome 1"/>
</dbReference>
<dbReference type="RNAct" id="P14859">
    <property type="molecule type" value="protein"/>
</dbReference>
<dbReference type="Bgee" id="ENSG00000143190">
    <property type="expression patterns" value="Expressed in buccal mucosa cell and 193 other cell types or tissues"/>
</dbReference>
<dbReference type="ExpressionAtlas" id="P14859">
    <property type="expression patterns" value="baseline and differential"/>
</dbReference>
<dbReference type="GO" id="GO:0000785">
    <property type="term" value="C:chromatin"/>
    <property type="evidence" value="ECO:0000247"/>
    <property type="project" value="NTNU_SB"/>
</dbReference>
<dbReference type="GO" id="GO:0005783">
    <property type="term" value="C:endoplasmic reticulum"/>
    <property type="evidence" value="ECO:0000314"/>
    <property type="project" value="HPA"/>
</dbReference>
<dbReference type="GO" id="GO:0043231">
    <property type="term" value="C:intracellular membrane-bounded organelle"/>
    <property type="evidence" value="ECO:0000314"/>
    <property type="project" value="HPA"/>
</dbReference>
<dbReference type="GO" id="GO:0005654">
    <property type="term" value="C:nucleoplasm"/>
    <property type="evidence" value="ECO:0000314"/>
    <property type="project" value="HPA"/>
</dbReference>
<dbReference type="GO" id="GO:0005634">
    <property type="term" value="C:nucleus"/>
    <property type="evidence" value="ECO:0000314"/>
    <property type="project" value="MGI"/>
</dbReference>
<dbReference type="GO" id="GO:0090575">
    <property type="term" value="C:RNA polymerase II transcription regulator complex"/>
    <property type="evidence" value="ECO:0000315"/>
    <property type="project" value="CAFA"/>
</dbReference>
<dbReference type="GO" id="GO:0003677">
    <property type="term" value="F:DNA binding"/>
    <property type="evidence" value="ECO:0000314"/>
    <property type="project" value="CAFA"/>
</dbReference>
<dbReference type="GO" id="GO:0001228">
    <property type="term" value="F:DNA-binding transcription activator activity, RNA polymerase II-specific"/>
    <property type="evidence" value="ECO:0000305"/>
    <property type="project" value="BHF-UCL"/>
</dbReference>
<dbReference type="GO" id="GO:0000981">
    <property type="term" value="F:DNA-binding transcription factor activity, RNA polymerase II-specific"/>
    <property type="evidence" value="ECO:0000315"/>
    <property type="project" value="CAFA"/>
</dbReference>
<dbReference type="GO" id="GO:0042802">
    <property type="term" value="F:identical protein binding"/>
    <property type="evidence" value="ECO:0000353"/>
    <property type="project" value="IntAct"/>
</dbReference>
<dbReference type="GO" id="GO:0000978">
    <property type="term" value="F:RNA polymerase II cis-regulatory region sequence-specific DNA binding"/>
    <property type="evidence" value="ECO:0000314"/>
    <property type="project" value="BHF-UCL"/>
</dbReference>
<dbReference type="GO" id="GO:0000979">
    <property type="term" value="F:RNA polymerase II core promoter sequence-specific DNA binding"/>
    <property type="evidence" value="ECO:0000315"/>
    <property type="project" value="CAFA"/>
</dbReference>
<dbReference type="GO" id="GO:0043565">
    <property type="term" value="F:sequence-specific DNA binding"/>
    <property type="evidence" value="ECO:0000314"/>
    <property type="project" value="UniProtKB"/>
</dbReference>
<dbReference type="GO" id="GO:0045892">
    <property type="term" value="P:negative regulation of DNA-templated transcription"/>
    <property type="evidence" value="ECO:0000314"/>
    <property type="project" value="UniProtKB"/>
</dbReference>
<dbReference type="GO" id="GO:1902895">
    <property type="term" value="P:positive regulation of miRNA transcription"/>
    <property type="evidence" value="ECO:0000305"/>
    <property type="project" value="BHF-UCL"/>
</dbReference>
<dbReference type="GO" id="GO:0045944">
    <property type="term" value="P:positive regulation of transcription by RNA polymerase II"/>
    <property type="evidence" value="ECO:0000314"/>
    <property type="project" value="NTNU_SB"/>
</dbReference>
<dbReference type="GO" id="GO:0006357">
    <property type="term" value="P:regulation of transcription by RNA polymerase II"/>
    <property type="evidence" value="ECO:0000318"/>
    <property type="project" value="GO_Central"/>
</dbReference>
<dbReference type="CDD" id="cd00086">
    <property type="entry name" value="homeodomain"/>
    <property type="match status" value="1"/>
</dbReference>
<dbReference type="DisProt" id="DP00231"/>
<dbReference type="FunFam" id="1.10.10.60:FF:000005">
    <property type="entry name" value="POU domain protein"/>
    <property type="match status" value="1"/>
</dbReference>
<dbReference type="FunFam" id="1.10.260.40:FF:000001">
    <property type="entry name" value="POU domain protein"/>
    <property type="match status" value="1"/>
</dbReference>
<dbReference type="Gene3D" id="1.10.10.60">
    <property type="entry name" value="Homeodomain-like"/>
    <property type="match status" value="1"/>
</dbReference>
<dbReference type="Gene3D" id="1.10.260.40">
    <property type="entry name" value="lambda repressor-like DNA-binding domains"/>
    <property type="match status" value="1"/>
</dbReference>
<dbReference type="IDEAL" id="IID00144"/>
<dbReference type="InterPro" id="IPR001356">
    <property type="entry name" value="HD"/>
</dbReference>
<dbReference type="InterPro" id="IPR017970">
    <property type="entry name" value="Homeobox_CS"/>
</dbReference>
<dbReference type="InterPro" id="IPR009057">
    <property type="entry name" value="Homeodomain-like_sf"/>
</dbReference>
<dbReference type="InterPro" id="IPR010982">
    <property type="entry name" value="Lambda_DNA-bd_dom_sf"/>
</dbReference>
<dbReference type="InterPro" id="IPR013847">
    <property type="entry name" value="POU"/>
</dbReference>
<dbReference type="InterPro" id="IPR045703">
    <property type="entry name" value="POU2F1_C"/>
</dbReference>
<dbReference type="InterPro" id="IPR000327">
    <property type="entry name" value="POU_dom"/>
</dbReference>
<dbReference type="InterPro" id="IPR050255">
    <property type="entry name" value="POU_domain_TF"/>
</dbReference>
<dbReference type="InterPro" id="IPR000972">
    <property type="entry name" value="TF_octamer"/>
</dbReference>
<dbReference type="PANTHER" id="PTHR11636">
    <property type="entry name" value="POU DOMAIN"/>
    <property type="match status" value="1"/>
</dbReference>
<dbReference type="PANTHER" id="PTHR11636:SF47">
    <property type="entry name" value="POU DOMAIN, CLASS 2, TRANSCRIPTION FACTOR 1"/>
    <property type="match status" value="1"/>
</dbReference>
<dbReference type="Pfam" id="PF00046">
    <property type="entry name" value="Homeodomain"/>
    <property type="match status" value="1"/>
</dbReference>
<dbReference type="Pfam" id="PF00157">
    <property type="entry name" value="Pou"/>
    <property type="match status" value="1"/>
</dbReference>
<dbReference type="Pfam" id="PF19536">
    <property type="entry name" value="POU2F1_C"/>
    <property type="match status" value="1"/>
</dbReference>
<dbReference type="PRINTS" id="PR00029">
    <property type="entry name" value="OCTAMER"/>
</dbReference>
<dbReference type="PRINTS" id="PR00028">
    <property type="entry name" value="POUDOMAIN"/>
</dbReference>
<dbReference type="SMART" id="SM00389">
    <property type="entry name" value="HOX"/>
    <property type="match status" value="1"/>
</dbReference>
<dbReference type="SMART" id="SM00352">
    <property type="entry name" value="POU"/>
    <property type="match status" value="1"/>
</dbReference>
<dbReference type="SUPFAM" id="SSF46689">
    <property type="entry name" value="Homeodomain-like"/>
    <property type="match status" value="1"/>
</dbReference>
<dbReference type="SUPFAM" id="SSF47413">
    <property type="entry name" value="lambda repressor-like DNA-binding domains"/>
    <property type="match status" value="1"/>
</dbReference>
<dbReference type="PROSITE" id="PS00027">
    <property type="entry name" value="HOMEOBOX_1"/>
    <property type="match status" value="1"/>
</dbReference>
<dbReference type="PROSITE" id="PS50071">
    <property type="entry name" value="HOMEOBOX_2"/>
    <property type="match status" value="1"/>
</dbReference>
<dbReference type="PROSITE" id="PS00035">
    <property type="entry name" value="POU_1"/>
    <property type="match status" value="1"/>
</dbReference>
<dbReference type="PROSITE" id="PS00465">
    <property type="entry name" value="POU_2"/>
    <property type="match status" value="1"/>
</dbReference>
<dbReference type="PROSITE" id="PS51179">
    <property type="entry name" value="POU_3"/>
    <property type="match status" value="1"/>
</dbReference>
<feature type="chain" id="PRO_0000100707" description="POU domain, class 2, transcription factor 1">
    <location>
        <begin position="1"/>
        <end position="743"/>
    </location>
</feature>
<feature type="domain" description="POU-specific" evidence="2">
    <location>
        <begin position="280"/>
        <end position="354"/>
    </location>
</feature>
<feature type="DNA-binding region" description="Homeobox" evidence="1">
    <location>
        <begin position="379"/>
        <end position="438"/>
    </location>
</feature>
<feature type="region of interest" description="Disordered" evidence="3">
    <location>
        <begin position="1"/>
        <end position="34"/>
    </location>
</feature>
<feature type="region of interest" description="Disordered" evidence="3">
    <location>
        <begin position="67"/>
        <end position="95"/>
    </location>
</feature>
<feature type="region of interest" description="Disordered" evidence="3">
    <location>
        <begin position="258"/>
        <end position="283"/>
    </location>
</feature>
<feature type="region of interest" description="Disordered" evidence="3">
    <location>
        <begin position="357"/>
        <end position="381"/>
    </location>
</feature>
<feature type="region of interest" description="Disordered" evidence="3">
    <location>
        <begin position="494"/>
        <end position="557"/>
    </location>
</feature>
<feature type="compositionally biased region" description="Polar residues" evidence="3">
    <location>
        <begin position="1"/>
        <end position="11"/>
    </location>
</feature>
<feature type="compositionally biased region" description="Low complexity" evidence="3">
    <location>
        <begin position="81"/>
        <end position="95"/>
    </location>
</feature>
<feature type="compositionally biased region" description="Low complexity" evidence="3">
    <location>
        <begin position="357"/>
        <end position="371"/>
    </location>
</feature>
<feature type="compositionally biased region" description="Polar residues" evidence="3">
    <location>
        <begin position="494"/>
        <end position="504"/>
    </location>
</feature>
<feature type="compositionally biased region" description="Low complexity" evidence="3">
    <location>
        <begin position="505"/>
        <end position="557"/>
    </location>
</feature>
<feature type="modified residue" description="Phosphothreonine" evidence="16">
    <location>
        <position position="270"/>
    </location>
</feature>
<feature type="modified residue" description="Phosphothreonine" evidence="17">
    <location>
        <position position="276"/>
    </location>
</feature>
<feature type="modified residue" description="Phosphoserine" evidence="16">
    <location>
        <position position="283"/>
    </location>
</feature>
<feature type="modified residue" description="Phosphoserine" evidence="7">
    <location>
        <position position="385"/>
    </location>
</feature>
<feature type="modified residue" description="Phosphoserine" evidence="16 17">
    <location>
        <position position="448"/>
    </location>
</feature>
<feature type="splice variant" id="VSP_013421" description="In isoform 3." evidence="14">
    <original>MNNPSETSKPSMESGDGNTG</original>
    <variation>MKTRMKIFVMIHFHLMNS</variation>
    <location>
        <begin position="1"/>
        <end position="20"/>
    </location>
</feature>
<feature type="splice variant" id="VSP_002320" description="In isoform 2." evidence="11">
    <original>M</original>
    <variation>MLDCSDYVLDSRM</variation>
    <location>
        <position position="1"/>
    </location>
</feature>
<feature type="splice variant" id="VSP_043195" description="In isoform 5 and isoform 6." evidence="12">
    <original>M</original>
    <variation>MADGGAASQDESSAAAAAAADSRM</variation>
    <location>
        <position position="1"/>
    </location>
</feature>
<feature type="splice variant" id="VSP_043196" description="In isoform 5." evidence="12">
    <location>
        <begin position="112"/>
        <end position="174"/>
    </location>
</feature>
<feature type="splice variant" id="VSP_013422" description="In isoform 4." evidence="13">
    <original>ALASGGSLPITSL</original>
    <variation>GLLHGLENFLTKN</variation>
    <location>
        <begin position="641"/>
        <end position="653"/>
    </location>
</feature>
<feature type="splice variant" id="VSP_013423" description="In isoform 4." evidence="13">
    <location>
        <begin position="654"/>
        <end position="743"/>
    </location>
</feature>
<feature type="sequence variant" id="VAR_035816" description="In a breast cancer sample; somatic mutation." evidence="8">
    <original>S</original>
    <variation>F</variation>
    <location>
        <position position="88"/>
    </location>
</feature>
<feature type="mutagenesis site" description="Loss of inhibition of DNA binding." evidence="7">
    <original>S</original>
    <variation>A</variation>
    <location>
        <position position="385"/>
    </location>
</feature>
<feature type="sequence conflict" description="In Ref. 1; CAA31767." evidence="14" ref="1">
    <original>L</original>
    <variation>Q</variation>
    <location>
        <position position="225"/>
    </location>
</feature>
<feature type="sequence conflict" description="In Ref. 2; AAM77920." evidence="14" ref="2">
    <original>T</original>
    <variation>I</variation>
    <location>
        <position position="546"/>
    </location>
</feature>
<feature type="helix" evidence="18">
    <location>
        <begin position="285"/>
        <end position="301"/>
    </location>
</feature>
<feature type="helix" evidence="18">
    <location>
        <begin position="306"/>
        <end position="317"/>
    </location>
</feature>
<feature type="helix" evidence="18">
    <location>
        <begin position="323"/>
        <end position="331"/>
    </location>
</feature>
<feature type="helix" evidence="18">
    <location>
        <begin position="336"/>
        <end position="353"/>
    </location>
</feature>
<feature type="helix" evidence="18">
    <location>
        <begin position="388"/>
        <end position="400"/>
    </location>
</feature>
<feature type="helix" evidence="18">
    <location>
        <begin position="406"/>
        <end position="416"/>
    </location>
</feature>
<feature type="helix" evidence="18">
    <location>
        <begin position="420"/>
        <end position="434"/>
    </location>
</feature>